<sequence>GADPGCQDVVTPVQ</sequence>
<proteinExistence type="evidence at protein level"/>
<protein>
    <recommendedName>
        <fullName>Unknown protein 3</fullName>
    </recommendedName>
</protein>
<organism>
    <name type="scientific">Ephedra distachya</name>
    <name type="common">Joint-fir</name>
    <name type="synonym">Ephedra vulgaris</name>
    <dbReference type="NCBI Taxonomy" id="3389"/>
    <lineage>
        <taxon>Eukaryota</taxon>
        <taxon>Viridiplantae</taxon>
        <taxon>Streptophyta</taxon>
        <taxon>Embryophyta</taxon>
        <taxon>Tracheophyta</taxon>
        <taxon>Spermatophyta</taxon>
        <taxon>Gnetopsida</taxon>
        <taxon>Gnetidae</taxon>
        <taxon>Ephedrales</taxon>
        <taxon>Ephedraceae</taxon>
        <taxon>Ephedra</taxon>
    </lineage>
</organism>
<keyword id="KW-0134">Cell wall</keyword>
<keyword id="KW-0903">Direct protein sequencing</keyword>
<keyword id="KW-0964">Secreted</keyword>
<dbReference type="GO" id="GO:0005576">
    <property type="term" value="C:extracellular region"/>
    <property type="evidence" value="ECO:0007669"/>
    <property type="project" value="UniProtKB-KW"/>
</dbReference>
<feature type="chain" id="PRO_0000326442" description="Unknown protein 3">
    <location>
        <begin position="1" status="less than"/>
        <end position="14" status="greater than"/>
    </location>
</feature>
<feature type="unsure residue" description="Q or K" evidence="1">
    <location>
        <position position="7"/>
    </location>
</feature>
<feature type="unsure residue" description="Q or K" evidence="1">
    <location>
        <position position="14"/>
    </location>
</feature>
<feature type="non-terminal residue" evidence="2">
    <location>
        <position position="1"/>
    </location>
</feature>
<feature type="non-terminal residue" evidence="2">
    <location>
        <position position="14"/>
    </location>
</feature>
<evidence type="ECO:0000269" key="1">
    <source>
    </source>
</evidence>
<evidence type="ECO:0000303" key="2">
    <source>
    </source>
</evidence>
<evidence type="ECO:0000305" key="3"/>
<comment type="subcellular location">
    <subcellularLocation>
        <location evidence="1">Secreted</location>
        <location evidence="1">Cell wall</location>
    </subcellularLocation>
</comment>
<reference evidence="3" key="1">
    <citation type="journal article" date="2009" name="J. Plant Physiol.">
        <title>Analysis of the soluble cell wall proteome of gymnosperms.</title>
        <authorList>
            <person name="Uzal E.N."/>
            <person name="Gomez-Ros L.V."/>
            <person name="Hernandez J.A."/>
            <person name="Pedreno M.A."/>
            <person name="Cuello J."/>
            <person name="Ros Barcelo A."/>
        </authorList>
    </citation>
    <scope>PROTEIN SEQUENCE</scope>
    <scope>SUBCELLULAR LOCATION</scope>
    <source>
        <strain evidence="1">PC-61</strain>
        <tissue evidence="1">Callus</tissue>
    </source>
</reference>
<name>UP03_EPHDI</name>
<accession>P85496</accession>